<sequence length="361" mass="40967">MKKNLMLIFGGVSFEHEISCKSAYSIYLALLDLNKYNIYPVYIDKCTGIWYLLDSVSDPPKLIDIDVLPIVSLLPGIGIFSNNKNLDIDVVFPVVHGRTGEDGAIQGVLKVMDIPCIGAGIIGSAISSNKYFCKLLLKSFNIPLVPFIGFRQYDYFLDKEEVKRNVREALGYPVIVKPAVLGSSIGINVAYSENQIEFFIEEALKYDLTILIEKFIEAREIECSIIGNEKIKIFSPGEVIVQDFIFYDYDAKYSVIPGNSIIFNIPAQLETNQLLSIKEYAFLVYKNLELRGMARVDFFVEKKSGKIYLNEINTIPGFTDISMFAKMCSHDGLQFKDLVDNLINYAFQSYINRKKRINFED</sequence>
<dbReference type="EC" id="6.3.2.4" evidence="2"/>
<dbReference type="EMBL" id="CP000013">
    <property type="protein sequence ID" value="AAU07057.1"/>
    <property type="molecule type" value="Genomic_DNA"/>
</dbReference>
<dbReference type="RefSeq" id="WP_011193545.1">
    <property type="nucleotide sequence ID" value="NZ_CP028872.1"/>
</dbReference>
<dbReference type="SMR" id="Q662G4"/>
<dbReference type="GeneID" id="45160991"/>
<dbReference type="KEGG" id="bga:BG0199"/>
<dbReference type="eggNOG" id="COG1181">
    <property type="taxonomic scope" value="Bacteria"/>
</dbReference>
<dbReference type="HOGENOM" id="CLU_039268_0_0_12"/>
<dbReference type="OrthoDB" id="9813261at2"/>
<dbReference type="UniPathway" id="UPA00219"/>
<dbReference type="Proteomes" id="UP000002276">
    <property type="component" value="Chromosome"/>
</dbReference>
<dbReference type="GO" id="GO:0005829">
    <property type="term" value="C:cytosol"/>
    <property type="evidence" value="ECO:0007669"/>
    <property type="project" value="TreeGrafter"/>
</dbReference>
<dbReference type="GO" id="GO:0005524">
    <property type="term" value="F:ATP binding"/>
    <property type="evidence" value="ECO:0007669"/>
    <property type="project" value="UniProtKB-KW"/>
</dbReference>
<dbReference type="GO" id="GO:0008716">
    <property type="term" value="F:D-alanine-D-alanine ligase activity"/>
    <property type="evidence" value="ECO:0007669"/>
    <property type="project" value="UniProtKB-UniRule"/>
</dbReference>
<dbReference type="GO" id="GO:0046872">
    <property type="term" value="F:metal ion binding"/>
    <property type="evidence" value="ECO:0007669"/>
    <property type="project" value="UniProtKB-KW"/>
</dbReference>
<dbReference type="GO" id="GO:0071555">
    <property type="term" value="P:cell wall organization"/>
    <property type="evidence" value="ECO:0007669"/>
    <property type="project" value="UniProtKB-KW"/>
</dbReference>
<dbReference type="GO" id="GO:0009252">
    <property type="term" value="P:peptidoglycan biosynthetic process"/>
    <property type="evidence" value="ECO:0007669"/>
    <property type="project" value="UniProtKB-UniRule"/>
</dbReference>
<dbReference type="GO" id="GO:0008360">
    <property type="term" value="P:regulation of cell shape"/>
    <property type="evidence" value="ECO:0007669"/>
    <property type="project" value="UniProtKB-KW"/>
</dbReference>
<dbReference type="Gene3D" id="3.40.50.20">
    <property type="match status" value="1"/>
</dbReference>
<dbReference type="Gene3D" id="3.30.1490.20">
    <property type="entry name" value="ATP-grasp fold, A domain"/>
    <property type="match status" value="1"/>
</dbReference>
<dbReference type="Gene3D" id="3.30.470.20">
    <property type="entry name" value="ATP-grasp fold, B domain"/>
    <property type="match status" value="1"/>
</dbReference>
<dbReference type="HAMAP" id="MF_00047">
    <property type="entry name" value="Dala_Dala_lig"/>
    <property type="match status" value="1"/>
</dbReference>
<dbReference type="InterPro" id="IPR011761">
    <property type="entry name" value="ATP-grasp"/>
</dbReference>
<dbReference type="InterPro" id="IPR013815">
    <property type="entry name" value="ATP_grasp_subdomain_1"/>
</dbReference>
<dbReference type="InterPro" id="IPR000291">
    <property type="entry name" value="D-Ala_lig_Van_CS"/>
</dbReference>
<dbReference type="InterPro" id="IPR005905">
    <property type="entry name" value="D_ala_D_ala"/>
</dbReference>
<dbReference type="InterPro" id="IPR011095">
    <property type="entry name" value="Dala_Dala_lig_C"/>
</dbReference>
<dbReference type="InterPro" id="IPR011127">
    <property type="entry name" value="Dala_Dala_lig_N"/>
</dbReference>
<dbReference type="InterPro" id="IPR016185">
    <property type="entry name" value="PreATP-grasp_dom_sf"/>
</dbReference>
<dbReference type="NCBIfam" id="TIGR01205">
    <property type="entry name" value="D_ala_D_alaTIGR"/>
    <property type="match status" value="1"/>
</dbReference>
<dbReference type="NCBIfam" id="NF002528">
    <property type="entry name" value="PRK01966.1-4"/>
    <property type="match status" value="1"/>
</dbReference>
<dbReference type="NCBIfam" id="NF011168">
    <property type="entry name" value="PRK14570.1"/>
    <property type="match status" value="1"/>
</dbReference>
<dbReference type="PANTHER" id="PTHR23132">
    <property type="entry name" value="D-ALANINE--D-ALANINE LIGASE"/>
    <property type="match status" value="1"/>
</dbReference>
<dbReference type="PANTHER" id="PTHR23132:SF25">
    <property type="entry name" value="D-ALANINE--D-ALANINE LIGASE A"/>
    <property type="match status" value="1"/>
</dbReference>
<dbReference type="Pfam" id="PF07478">
    <property type="entry name" value="Dala_Dala_lig_C"/>
    <property type="match status" value="1"/>
</dbReference>
<dbReference type="Pfam" id="PF01820">
    <property type="entry name" value="Dala_Dala_lig_N"/>
    <property type="match status" value="1"/>
</dbReference>
<dbReference type="PIRSF" id="PIRSF039102">
    <property type="entry name" value="Ddl/VanB"/>
    <property type="match status" value="1"/>
</dbReference>
<dbReference type="SUPFAM" id="SSF56059">
    <property type="entry name" value="Glutathione synthetase ATP-binding domain-like"/>
    <property type="match status" value="1"/>
</dbReference>
<dbReference type="SUPFAM" id="SSF52440">
    <property type="entry name" value="PreATP-grasp domain"/>
    <property type="match status" value="1"/>
</dbReference>
<dbReference type="PROSITE" id="PS50975">
    <property type="entry name" value="ATP_GRASP"/>
    <property type="match status" value="1"/>
</dbReference>
<dbReference type="PROSITE" id="PS00843">
    <property type="entry name" value="DALA_DALA_LIGASE_1"/>
    <property type="match status" value="1"/>
</dbReference>
<dbReference type="PROSITE" id="PS00844">
    <property type="entry name" value="DALA_DALA_LIGASE_2"/>
    <property type="match status" value="1"/>
</dbReference>
<evidence type="ECO:0000250" key="1"/>
<evidence type="ECO:0000255" key="2">
    <source>
        <dbReference type="HAMAP-Rule" id="MF_00047"/>
    </source>
</evidence>
<keyword id="KW-0067">ATP-binding</keyword>
<keyword id="KW-0133">Cell shape</keyword>
<keyword id="KW-0961">Cell wall biogenesis/degradation</keyword>
<keyword id="KW-0963">Cytoplasm</keyword>
<keyword id="KW-0436">Ligase</keyword>
<keyword id="KW-0460">Magnesium</keyword>
<keyword id="KW-0464">Manganese</keyword>
<keyword id="KW-0479">Metal-binding</keyword>
<keyword id="KW-0547">Nucleotide-binding</keyword>
<keyword id="KW-0573">Peptidoglycan synthesis</keyword>
<comment type="function">
    <text evidence="2">Cell wall formation.</text>
</comment>
<comment type="catalytic activity">
    <reaction evidence="2">
        <text>2 D-alanine + ATP = D-alanyl-D-alanine + ADP + phosphate + H(+)</text>
        <dbReference type="Rhea" id="RHEA:11224"/>
        <dbReference type="ChEBI" id="CHEBI:15378"/>
        <dbReference type="ChEBI" id="CHEBI:30616"/>
        <dbReference type="ChEBI" id="CHEBI:43474"/>
        <dbReference type="ChEBI" id="CHEBI:57416"/>
        <dbReference type="ChEBI" id="CHEBI:57822"/>
        <dbReference type="ChEBI" id="CHEBI:456216"/>
        <dbReference type="EC" id="6.3.2.4"/>
    </reaction>
</comment>
<comment type="cofactor">
    <cofactor evidence="1">
        <name>Mg(2+)</name>
        <dbReference type="ChEBI" id="CHEBI:18420"/>
    </cofactor>
    <cofactor evidence="1">
        <name>Mn(2+)</name>
        <dbReference type="ChEBI" id="CHEBI:29035"/>
    </cofactor>
    <text evidence="1">Binds 2 magnesium or manganese ions per subunit.</text>
</comment>
<comment type="pathway">
    <text evidence="2">Cell wall biogenesis; peptidoglycan biosynthesis.</text>
</comment>
<comment type="subcellular location">
    <subcellularLocation>
        <location evidence="2">Cytoplasm</location>
    </subcellularLocation>
</comment>
<comment type="similarity">
    <text evidence="2">Belongs to the D-alanine--D-alanine ligase family.</text>
</comment>
<organism>
    <name type="scientific">Borrelia garinii subsp. bavariensis (strain ATCC BAA-2496 / DSM 23469 / PBi)</name>
    <name type="common">Borreliella bavariensis</name>
    <dbReference type="NCBI Taxonomy" id="290434"/>
    <lineage>
        <taxon>Bacteria</taxon>
        <taxon>Pseudomonadati</taxon>
        <taxon>Spirochaetota</taxon>
        <taxon>Spirochaetia</taxon>
        <taxon>Spirochaetales</taxon>
        <taxon>Borreliaceae</taxon>
        <taxon>Borreliella</taxon>
    </lineage>
</organism>
<name>DDL_BORGP</name>
<feature type="chain" id="PRO_0000341063" description="D-alanine--D-alanine ligase">
    <location>
        <begin position="1"/>
        <end position="361"/>
    </location>
</feature>
<feature type="domain" description="ATP-grasp" evidence="2">
    <location>
        <begin position="134"/>
        <end position="344"/>
    </location>
</feature>
<feature type="binding site" evidence="2">
    <location>
        <begin position="167"/>
        <end position="222"/>
    </location>
    <ligand>
        <name>ATP</name>
        <dbReference type="ChEBI" id="CHEBI:30616"/>
    </ligand>
</feature>
<feature type="binding site" evidence="2">
    <location>
        <position position="297"/>
    </location>
    <ligand>
        <name>Mg(2+)</name>
        <dbReference type="ChEBI" id="CHEBI:18420"/>
        <label>1</label>
    </ligand>
</feature>
<feature type="binding site" evidence="2">
    <location>
        <position position="311"/>
    </location>
    <ligand>
        <name>Mg(2+)</name>
        <dbReference type="ChEBI" id="CHEBI:18420"/>
        <label>1</label>
    </ligand>
</feature>
<feature type="binding site" evidence="2">
    <location>
        <position position="311"/>
    </location>
    <ligand>
        <name>Mg(2+)</name>
        <dbReference type="ChEBI" id="CHEBI:18420"/>
        <label>2</label>
    </ligand>
</feature>
<feature type="binding site" evidence="2">
    <location>
        <position position="313"/>
    </location>
    <ligand>
        <name>Mg(2+)</name>
        <dbReference type="ChEBI" id="CHEBI:18420"/>
        <label>2</label>
    </ligand>
</feature>
<proteinExistence type="inferred from homology"/>
<gene>
    <name evidence="2" type="primary">ddl</name>
    <name type="ordered locus">BG0199</name>
</gene>
<protein>
    <recommendedName>
        <fullName evidence="2">D-alanine--D-alanine ligase</fullName>
        <ecNumber evidence="2">6.3.2.4</ecNumber>
    </recommendedName>
    <alternativeName>
        <fullName evidence="2">D-Ala-D-Ala ligase</fullName>
    </alternativeName>
    <alternativeName>
        <fullName evidence="2">D-alanylalanine synthetase</fullName>
    </alternativeName>
</protein>
<accession>Q662G4</accession>
<reference key="1">
    <citation type="journal article" date="2004" name="Nucleic Acids Res.">
        <title>Comparative analysis of the Borrelia garinii genome.</title>
        <authorList>
            <person name="Gloeckner G."/>
            <person name="Lehmann R."/>
            <person name="Romualdi A."/>
            <person name="Pradella S."/>
            <person name="Schulte-Spechtel U."/>
            <person name="Schilhabel M."/>
            <person name="Wilske B."/>
            <person name="Suehnel J."/>
            <person name="Platzer M."/>
        </authorList>
    </citation>
    <scope>NUCLEOTIDE SEQUENCE [LARGE SCALE GENOMIC DNA]</scope>
    <source>
        <strain>ATCC BAA-2496 / DSM 23469 / PBi</strain>
    </source>
</reference>